<keyword id="KW-0056">Arginine metabolism</keyword>
<keyword id="KW-0520">NAD</keyword>
<keyword id="KW-0560">Oxidoreductase</keyword>
<keyword id="KW-1185">Reference proteome</keyword>
<evidence type="ECO:0000255" key="1">
    <source>
        <dbReference type="HAMAP-Rule" id="MF_01174"/>
    </source>
</evidence>
<comment type="function">
    <text evidence="1">Catalyzes the NAD-dependent reduction of succinylglutamate semialdehyde into succinylglutamate.</text>
</comment>
<comment type="catalytic activity">
    <reaction evidence="1">
        <text>N-succinyl-L-glutamate 5-semialdehyde + NAD(+) + H2O = N-succinyl-L-glutamate + NADH + 2 H(+)</text>
        <dbReference type="Rhea" id="RHEA:10812"/>
        <dbReference type="ChEBI" id="CHEBI:15377"/>
        <dbReference type="ChEBI" id="CHEBI:15378"/>
        <dbReference type="ChEBI" id="CHEBI:57540"/>
        <dbReference type="ChEBI" id="CHEBI:57945"/>
        <dbReference type="ChEBI" id="CHEBI:58520"/>
        <dbReference type="ChEBI" id="CHEBI:58763"/>
        <dbReference type="EC" id="1.2.1.71"/>
    </reaction>
</comment>
<comment type="pathway">
    <text evidence="1">Amino-acid degradation; L-arginine degradation via AST pathway; L-glutamate and succinate from L-arginine: step 4/5.</text>
</comment>
<comment type="similarity">
    <text evidence="1">Belongs to the aldehyde dehydrogenase family. AstD subfamily.</text>
</comment>
<sequence>MTHWIAGEWVAGTGEKLESHTPYSHELLWQGYSASGEQVDAAVKAARRAFLDWKKRPFAEREQKVLAFAELVKANSEQIAQVIAKETGKPLWETRTEAASIAGKIAISIRAYHERTGETVREAAGNQLVLRHRPLGVMAVFGPYNFPGHLPNGHIVPALLAGNTVVFKPSEQTPWTGEVLMQLWQQAGLPAGVINLVQGSKETGIALAQSRGIDGLLFTGSANTGHLLHRQFAGQPDKMLALEMGGNNPMVISEHYGDLDATVYTIIQSAFISSGQRCTCVRRLYVPQGTKGDALLDKLVSVTAKLRIDQPFAEPAPFMGPLVSEAAAQAILKAQADLQALGGKSLLEARALHAAFITPAIIDVTAIERLPDDEYFGPLLQVVRYQTLAQAVELANDTRFGLSAGLVSTDDGEWDYFVEHIRAGIVNRNRQLTGASGDAPFGGPGASGNLRPSAFYAADYCAYPMASMEGDTTLLPATLSPGVEL</sequence>
<dbReference type="EC" id="1.2.1.71" evidence="1"/>
<dbReference type="EMBL" id="AE003852">
    <property type="protein sequence ID" value="AAF95757.1"/>
    <property type="molecule type" value="Genomic_DNA"/>
</dbReference>
<dbReference type="PIR" id="D82054">
    <property type="entry name" value="D82054"/>
</dbReference>
<dbReference type="RefSeq" id="NP_232244.1">
    <property type="nucleotide sequence ID" value="NC_002505.1"/>
</dbReference>
<dbReference type="RefSeq" id="WP_000150128.1">
    <property type="nucleotide sequence ID" value="NZ_LT906614.1"/>
</dbReference>
<dbReference type="SMR" id="Q9KNW4"/>
<dbReference type="STRING" id="243277.VC_2616"/>
<dbReference type="DNASU" id="2615633"/>
<dbReference type="EnsemblBacteria" id="AAF95757">
    <property type="protein sequence ID" value="AAF95757"/>
    <property type="gene ID" value="VC_2616"/>
</dbReference>
<dbReference type="KEGG" id="vch:VC_2616"/>
<dbReference type="PATRIC" id="fig|243277.26.peg.2494"/>
<dbReference type="eggNOG" id="COG1012">
    <property type="taxonomic scope" value="Bacteria"/>
</dbReference>
<dbReference type="HOGENOM" id="CLU_005391_1_0_6"/>
<dbReference type="UniPathway" id="UPA00185">
    <property type="reaction ID" value="UER00282"/>
</dbReference>
<dbReference type="Proteomes" id="UP000000584">
    <property type="component" value="Chromosome 1"/>
</dbReference>
<dbReference type="GO" id="GO:0043824">
    <property type="term" value="F:succinylglutamate-semialdehyde dehydrogenase activity"/>
    <property type="evidence" value="ECO:0007669"/>
    <property type="project" value="UniProtKB-EC"/>
</dbReference>
<dbReference type="GO" id="GO:0019544">
    <property type="term" value="P:arginine catabolic process to glutamate"/>
    <property type="evidence" value="ECO:0007669"/>
    <property type="project" value="UniProtKB-UniRule"/>
</dbReference>
<dbReference type="GO" id="GO:0019545">
    <property type="term" value="P:arginine catabolic process to succinate"/>
    <property type="evidence" value="ECO:0007669"/>
    <property type="project" value="UniProtKB-UniRule"/>
</dbReference>
<dbReference type="CDD" id="cd07095">
    <property type="entry name" value="ALDH_SGSD_AstD"/>
    <property type="match status" value="1"/>
</dbReference>
<dbReference type="FunFam" id="3.40.605.10:FF:000010">
    <property type="entry name" value="N-succinylglutamate 5-semialdehyde dehydrogenase"/>
    <property type="match status" value="1"/>
</dbReference>
<dbReference type="Gene3D" id="3.40.605.10">
    <property type="entry name" value="Aldehyde Dehydrogenase, Chain A, domain 1"/>
    <property type="match status" value="1"/>
</dbReference>
<dbReference type="Gene3D" id="3.40.309.10">
    <property type="entry name" value="Aldehyde Dehydrogenase, Chain A, domain 2"/>
    <property type="match status" value="1"/>
</dbReference>
<dbReference type="HAMAP" id="MF_01174">
    <property type="entry name" value="Aldedh_AstD"/>
    <property type="match status" value="1"/>
</dbReference>
<dbReference type="InterPro" id="IPR016161">
    <property type="entry name" value="Ald_DH/histidinol_DH"/>
</dbReference>
<dbReference type="InterPro" id="IPR016163">
    <property type="entry name" value="Ald_DH_C"/>
</dbReference>
<dbReference type="InterPro" id="IPR016160">
    <property type="entry name" value="Ald_DH_CS_CYS"/>
</dbReference>
<dbReference type="InterPro" id="IPR029510">
    <property type="entry name" value="Ald_DH_CS_GLU"/>
</dbReference>
<dbReference type="InterPro" id="IPR016162">
    <property type="entry name" value="Ald_DH_N"/>
</dbReference>
<dbReference type="InterPro" id="IPR015590">
    <property type="entry name" value="Aldehyde_DH_dom"/>
</dbReference>
<dbReference type="InterPro" id="IPR017649">
    <property type="entry name" value="SuccinylGlu_semiald_DH_AstD"/>
</dbReference>
<dbReference type="NCBIfam" id="TIGR03240">
    <property type="entry name" value="arg_catab_astD"/>
    <property type="match status" value="1"/>
</dbReference>
<dbReference type="NCBIfam" id="NF006992">
    <property type="entry name" value="PRK09457.1"/>
    <property type="match status" value="1"/>
</dbReference>
<dbReference type="PANTHER" id="PTHR11699">
    <property type="entry name" value="ALDEHYDE DEHYDROGENASE-RELATED"/>
    <property type="match status" value="1"/>
</dbReference>
<dbReference type="Pfam" id="PF00171">
    <property type="entry name" value="Aldedh"/>
    <property type="match status" value="1"/>
</dbReference>
<dbReference type="SUPFAM" id="SSF53720">
    <property type="entry name" value="ALDH-like"/>
    <property type="match status" value="1"/>
</dbReference>
<dbReference type="PROSITE" id="PS00070">
    <property type="entry name" value="ALDEHYDE_DEHYDR_CYS"/>
    <property type="match status" value="1"/>
</dbReference>
<dbReference type="PROSITE" id="PS00687">
    <property type="entry name" value="ALDEHYDE_DEHYDR_GLU"/>
    <property type="match status" value="1"/>
</dbReference>
<reference key="1">
    <citation type="journal article" date="2000" name="Nature">
        <title>DNA sequence of both chromosomes of the cholera pathogen Vibrio cholerae.</title>
        <authorList>
            <person name="Heidelberg J.F."/>
            <person name="Eisen J.A."/>
            <person name="Nelson W.C."/>
            <person name="Clayton R.A."/>
            <person name="Gwinn M.L."/>
            <person name="Dodson R.J."/>
            <person name="Haft D.H."/>
            <person name="Hickey E.K."/>
            <person name="Peterson J.D."/>
            <person name="Umayam L.A."/>
            <person name="Gill S.R."/>
            <person name="Nelson K.E."/>
            <person name="Read T.D."/>
            <person name="Tettelin H."/>
            <person name="Richardson D.L."/>
            <person name="Ermolaeva M.D."/>
            <person name="Vamathevan J.J."/>
            <person name="Bass S."/>
            <person name="Qin H."/>
            <person name="Dragoi I."/>
            <person name="Sellers P."/>
            <person name="McDonald L.A."/>
            <person name="Utterback T.R."/>
            <person name="Fleischmann R.D."/>
            <person name="Nierman W.C."/>
            <person name="White O."/>
            <person name="Salzberg S.L."/>
            <person name="Smith H.O."/>
            <person name="Colwell R.R."/>
            <person name="Mekalanos J.J."/>
            <person name="Venter J.C."/>
            <person name="Fraser C.M."/>
        </authorList>
    </citation>
    <scope>NUCLEOTIDE SEQUENCE [LARGE SCALE GENOMIC DNA]</scope>
    <source>
        <strain>ATCC 39315 / El Tor Inaba N16961</strain>
    </source>
</reference>
<protein>
    <recommendedName>
        <fullName evidence="1">N-succinylglutamate 5-semialdehyde dehydrogenase</fullName>
        <ecNumber evidence="1">1.2.1.71</ecNumber>
    </recommendedName>
    <alternativeName>
        <fullName evidence="1">Succinylglutamic semialdehyde dehydrogenase</fullName>
        <shortName evidence="1">SGSD</shortName>
    </alternativeName>
</protein>
<accession>Q9KNW4</accession>
<organism>
    <name type="scientific">Vibrio cholerae serotype O1 (strain ATCC 39315 / El Tor Inaba N16961)</name>
    <dbReference type="NCBI Taxonomy" id="243277"/>
    <lineage>
        <taxon>Bacteria</taxon>
        <taxon>Pseudomonadati</taxon>
        <taxon>Pseudomonadota</taxon>
        <taxon>Gammaproteobacteria</taxon>
        <taxon>Vibrionales</taxon>
        <taxon>Vibrionaceae</taxon>
        <taxon>Vibrio</taxon>
    </lineage>
</organism>
<name>ASTD_VIBCH</name>
<feature type="chain" id="PRO_0000262431" description="N-succinylglutamate 5-semialdehyde dehydrogenase">
    <location>
        <begin position="1"/>
        <end position="485"/>
    </location>
</feature>
<feature type="active site" evidence="1">
    <location>
        <position position="243"/>
    </location>
</feature>
<feature type="active site" evidence="1">
    <location>
        <position position="278"/>
    </location>
</feature>
<feature type="binding site" evidence="1">
    <location>
        <begin position="220"/>
        <end position="225"/>
    </location>
    <ligand>
        <name>NAD(+)</name>
        <dbReference type="ChEBI" id="CHEBI:57540"/>
    </ligand>
</feature>
<proteinExistence type="inferred from homology"/>
<gene>
    <name evidence="1" type="primary">astD</name>
    <name type="ordered locus">VC_2616</name>
</gene>